<dbReference type="EMBL" id="CP017630">
    <property type="protein sequence ID" value="AOW30829.1"/>
    <property type="molecule type" value="Genomic_DNA"/>
</dbReference>
<dbReference type="RefSeq" id="XP_718630.1">
    <property type="nucleotide sequence ID" value="XM_713537.1"/>
</dbReference>
<dbReference type="SMR" id="Q5AAL9"/>
<dbReference type="BioGRID" id="1222788">
    <property type="interactions" value="10"/>
</dbReference>
<dbReference type="STRING" id="237561.Q5AAL9"/>
<dbReference type="GlyCosmos" id="Q5AAL9">
    <property type="glycosylation" value="8 sites, No reported glycans"/>
</dbReference>
<dbReference type="EnsemblFungi" id="CR_00610W_A-T">
    <property type="protein sequence ID" value="CR_00610W_A-T-p1"/>
    <property type="gene ID" value="CR_00610W_A"/>
</dbReference>
<dbReference type="GeneID" id="3639694"/>
<dbReference type="KEGG" id="cal:CAALFM_CR00610WA"/>
<dbReference type="CGD" id="CAL0000197990">
    <property type="gene designation" value="IFF4"/>
</dbReference>
<dbReference type="VEuPathDB" id="FungiDB:CR_00610W_A"/>
<dbReference type="eggNOG" id="KOG1216">
    <property type="taxonomic scope" value="Eukaryota"/>
</dbReference>
<dbReference type="HOGENOM" id="CLU_006199_1_0_1"/>
<dbReference type="InParanoid" id="Q5AAL9"/>
<dbReference type="OMA" id="DTINTEY"/>
<dbReference type="OrthoDB" id="4026618at2759"/>
<dbReference type="PHI-base" id="PHI:11387"/>
<dbReference type="PHI-base" id="PHI:3513"/>
<dbReference type="Proteomes" id="UP000000559">
    <property type="component" value="Chromosome R"/>
</dbReference>
<dbReference type="GO" id="GO:0009986">
    <property type="term" value="C:cell surface"/>
    <property type="evidence" value="ECO:0000314"/>
    <property type="project" value="CGD"/>
</dbReference>
<dbReference type="GO" id="GO:0005576">
    <property type="term" value="C:extracellular region"/>
    <property type="evidence" value="ECO:0007669"/>
    <property type="project" value="UniProtKB-KW"/>
</dbReference>
<dbReference type="GO" id="GO:0009277">
    <property type="term" value="C:fungal-type cell wall"/>
    <property type="evidence" value="ECO:0000314"/>
    <property type="project" value="CGD"/>
</dbReference>
<dbReference type="GO" id="GO:0098552">
    <property type="term" value="C:side of membrane"/>
    <property type="evidence" value="ECO:0007669"/>
    <property type="project" value="UniProtKB-KW"/>
</dbReference>
<dbReference type="GO" id="GO:0031589">
    <property type="term" value="P:cell-substrate adhesion"/>
    <property type="evidence" value="ECO:0000315"/>
    <property type="project" value="CGD"/>
</dbReference>
<dbReference type="InterPro" id="IPR021031">
    <property type="entry name" value="Hyphal-reg_cell_wall_N"/>
</dbReference>
<dbReference type="Pfam" id="PF11765">
    <property type="entry name" value="Hyphal_reg_CWP"/>
    <property type="match status" value="1"/>
</dbReference>
<evidence type="ECO:0000255" key="1"/>
<evidence type="ECO:0000256" key="2">
    <source>
        <dbReference type="SAM" id="MobiDB-lite"/>
    </source>
</evidence>
<evidence type="ECO:0000269" key="3">
    <source>
    </source>
</evidence>
<evidence type="ECO:0000269" key="4">
    <source>
    </source>
</evidence>
<evidence type="ECO:0000269" key="5">
    <source>
    </source>
</evidence>
<evidence type="ECO:0000269" key="6">
    <source>
    </source>
</evidence>
<evidence type="ECO:0000269" key="7">
    <source>
    </source>
</evidence>
<evidence type="ECO:0000305" key="8"/>
<accession>Q5AAL9</accession>
<accession>A0A1D8PRR0</accession>
<proteinExistence type="evidence at protein level"/>
<organism>
    <name type="scientific">Candida albicans (strain SC5314 / ATCC MYA-2876)</name>
    <name type="common">Yeast</name>
    <dbReference type="NCBI Taxonomy" id="237561"/>
    <lineage>
        <taxon>Eukaryota</taxon>
        <taxon>Fungi</taxon>
        <taxon>Dikarya</taxon>
        <taxon>Ascomycota</taxon>
        <taxon>Saccharomycotina</taxon>
        <taxon>Pichiomycetes</taxon>
        <taxon>Debaryomycetaceae</taxon>
        <taxon>Candida/Lodderomyces clade</taxon>
        <taxon>Candida</taxon>
    </lineage>
</organism>
<reference key="1">
    <citation type="journal article" date="2004" name="Proc. Natl. Acad. Sci. U.S.A.">
        <title>The diploid genome sequence of Candida albicans.</title>
        <authorList>
            <person name="Jones T."/>
            <person name="Federspiel N.A."/>
            <person name="Chibana H."/>
            <person name="Dungan J."/>
            <person name="Kalman S."/>
            <person name="Magee B.B."/>
            <person name="Newport G."/>
            <person name="Thorstenson Y.R."/>
            <person name="Agabian N."/>
            <person name="Magee P.T."/>
            <person name="Davis R.W."/>
            <person name="Scherer S."/>
        </authorList>
    </citation>
    <scope>NUCLEOTIDE SEQUENCE [LARGE SCALE GENOMIC DNA]</scope>
    <source>
        <strain>SC5314 / ATCC MYA-2876</strain>
    </source>
</reference>
<reference key="2">
    <citation type="journal article" date="2007" name="Genome Biol.">
        <title>Assembly of the Candida albicans genome into sixteen supercontigs aligned on the eight chromosomes.</title>
        <authorList>
            <person name="van het Hoog M."/>
            <person name="Rast T.J."/>
            <person name="Martchenko M."/>
            <person name="Grindle S."/>
            <person name="Dignard D."/>
            <person name="Hogues H."/>
            <person name="Cuomo C."/>
            <person name="Berriman M."/>
            <person name="Scherer S."/>
            <person name="Magee B.B."/>
            <person name="Whiteway M."/>
            <person name="Chibana H."/>
            <person name="Nantel A."/>
            <person name="Magee P.T."/>
        </authorList>
    </citation>
    <scope>GENOME REANNOTATION</scope>
    <source>
        <strain>SC5314 / ATCC MYA-2876</strain>
    </source>
</reference>
<reference key="3">
    <citation type="journal article" date="2013" name="Genome Biol.">
        <title>Assembly of a phased diploid Candida albicans genome facilitates allele-specific measurements and provides a simple model for repeat and indel structure.</title>
        <authorList>
            <person name="Muzzey D."/>
            <person name="Schwartz K."/>
            <person name="Weissman J.S."/>
            <person name="Sherlock G."/>
        </authorList>
    </citation>
    <scope>NUCLEOTIDE SEQUENCE [LARGE SCALE GENOMIC DNA]</scope>
    <scope>GENOME REANNOTATION</scope>
    <source>
        <strain>SC5314 / ATCC MYA-2876</strain>
    </source>
</reference>
<reference key="4">
    <citation type="journal article" date="2003" name="Yeast">
        <title>An analysis of the Candida albicans genome database for soluble secreted proteins using computer-based prediction algorithms.</title>
        <authorList>
            <person name="Lee S.A."/>
            <person name="Wormsley S."/>
            <person name="Kamoun S."/>
            <person name="Lee A.F."/>
            <person name="Joiner K."/>
            <person name="Wong B."/>
        </authorList>
    </citation>
    <scope>PREDICTION OF GPI-ANCHOR</scope>
</reference>
<reference key="5">
    <citation type="journal article" date="2003" name="Yeast">
        <title>Genome-wide identification of fungal GPI proteins.</title>
        <authorList>
            <person name="De Groot P.W."/>
            <person name="Hellingwerf K.J."/>
            <person name="Klis F.M."/>
        </authorList>
    </citation>
    <scope>PREDICTION OF GPI-ANCHOR</scope>
</reference>
<reference key="6">
    <citation type="journal article" date="2007" name="Colloids Surf. B Biointerfaces">
        <title>Disruption of Candida albicans IFF4 gene involves modifications of the cell electrical surface properties.</title>
        <authorList>
            <person name="Kempf M."/>
            <person name="Apaire-Marchais V."/>
            <person name="Saulnier P."/>
            <person name="Licznar P."/>
            <person name="Lefrancois C."/>
            <person name="Robert R."/>
            <person name="Cottin J."/>
        </authorList>
    </citation>
    <scope>FUNCTION</scope>
    <scope>DISRUPTION PHENOTYPE</scope>
</reference>
<reference key="7">
    <citation type="journal article" date="2007" name="Infect. Immun.">
        <title>Candida albicans Iff11, a secreted protein required for cell wall structure and virulence.</title>
        <authorList>
            <person name="Bates S."/>
            <person name="de la Rosa J.M."/>
            <person name="MacCallum D.M."/>
            <person name="Brown A.J."/>
            <person name="Gow N.A."/>
            <person name="Odds F.C."/>
        </authorList>
    </citation>
    <scope>IDENTIFICATION IN THE HYR1/IFF FAMILY</scope>
</reference>
<reference key="8">
    <citation type="journal article" date="2008" name="Eukaryot. Cell">
        <title>Gene overexpression/suppression analysis of candidate virulence factors of Candida albicans.</title>
        <authorList>
            <person name="Fu Y."/>
            <person name="Luo G."/>
            <person name="Spellberg B.J."/>
            <person name="Edwards J.E. Jr."/>
            <person name="Ibrahim A.S."/>
        </authorList>
    </citation>
    <scope>FUNCTION</scope>
</reference>
<reference key="9">
    <citation type="journal article" date="2011" name="Eukaryot. Cell">
        <title>Unexpected role for a serine/threonine-rich domain in the Candida albicans Iff protein family.</title>
        <authorList>
            <person name="Boisrame A."/>
            <person name="Cornu A."/>
            <person name="Da Costa G."/>
            <person name="Richard M.L."/>
        </authorList>
    </citation>
    <scope>SUBCELLULAR LOCATION</scope>
</reference>
<reference key="10">
    <citation type="journal article" date="2011" name="J. Biol. Chem.">
        <title>Cap2-HAP complex is a critical transcriptional regulator that has dual but contrasting roles in regulation of iron homeostasis in Candida albicans.</title>
        <authorList>
            <person name="Singh R.P."/>
            <person name="Prasad H.K."/>
            <person name="Sinha I."/>
            <person name="Agarwal N."/>
            <person name="Natarajan K."/>
        </authorList>
    </citation>
    <scope>INDUCTION</scope>
</reference>
<reference key="11">
    <citation type="journal article" date="2013" name="Cell. Microbiol.">
        <title>Cell surface changes in the Candida albicans mitochondrial mutant goa1Delta are associated with reduced recognition by innate immune cells.</title>
        <authorList>
            <person name="She X."/>
            <person name="Zhang L."/>
            <person name="Chen H."/>
            <person name="Calderone R."/>
            <person name="Li D."/>
        </authorList>
    </citation>
    <scope>INDUCTION</scope>
</reference>
<sequence>MKFLQKFIITVALLTNIVFAIDITENKVDRGSVTLSFGEIIIHPGASWSIIDNAFSNFIGKLDVKAKSALYISSTSHLLALQVSLTTLLHSINNSGIISFDSRVSLTPSSYDLRGLSFTNSGEMYFAASGRVPSTMSLTSASWTNTGLLSFYQNQRTSGAVCLGFPLGSITNSGKICLNNQVYQQTTQIKGSGCFSANGDSTIYIANVLLSVSANQNFHLVDKDSSMIVQAISTTQTFNVYGFGNGNKIGLTLPLIGIILESAHSYDSSTGILTLRNFLLEQRFNIGLGYDSSKFSVVTDSGSGIPSTIWGSVTYTGRVPTRALPKSCQMACKPIPEAPGVKPTDYTTTITKTNTAGNTVTETGAVTISTDKSGSWFTTTSIFPTLTTATSTSITTTLSNEAHIKTTDNTLAKVSSTVDYISAPISSSEFISLESFVDETLSNENPISTSTDYASENSFAISESTFITASDFQATESLVTESYFSKSQSSDSESFVINTSSAVDNSYVSSSSSAGGSSFPEETHMLQTSDSDLSSTAGSESDVTEFSDVSLATASDSSIADKSIGTESLYSEISLVSASESTGSIGELSISGDTLLKTASETKFVKSSFSSDLISETSSELFVSSSVSTDMILETANDSFITSDKVVETPSYSNELAFETVSETIINSFVSSESSLNTASNSLIASKPSTDSSSYTTDIDFETTTKSFAESPSYFSETVSEIASKSSLSMVEPSCWSELPFETSIESLIAPSYISSEPAPETASESFIVKPSYSEIASESITKSIISTIEASISSDIFSDATTGSIVVQPSVSSGISLEIPSESMLFSESSISKPFISSQSIHECTSDSILVVPSFFSSDVSFETVEYSSTVSTSVDAEPSYSSEISLKTPSESFIVSETFLEPSYSGEVVLATPSESVVASETDVNKPSYSNEAVLQTPSESYILSETGVKESSESSEFALSTPSTSFIASETFTVQSFASSEVSFGSDRESTISTEAIQVEPSISNDVVLETASESFISKAPTTSEFTILSETSIVEPSILSDLRFETTSQSTEMAPSATGVSYFSSTETPLASSSSYESSFATSSVSAIQSINSQVASASFVSADSTDSSEVGSSYTTASAFGPASSASEEKFISVWETSNSGGSFTLESSTSVASVVTTPLPFTSNDIITEISSTWNGAKSDSPHTSESDITSQYNSHSTSVATRSDSISLTDTFEIGFASTWTTGGSGNGGSMKSDVSNQDSYATMLPTSFLDTSNSDITTGVVSTWDAKNSNSYTSAELSTDPYSSDGYASSATAALSITESIPTTDTINTEYHSNGDITTSGGFKEISLTSHYEGGFTSESAGYTIASPSGSTQEFATATITSCFESKCSENVVTYISSVSHSTVTTGYEDTRFTGSIFSGDLASTGDNIVSASGRSVTDATNPFATNTDIGTTSTVSLYGDLNDSDSSVSGYPTNRSDSNGYANTPTTGSNTSGDFSQTIETGSSSFTAIPFENGSTNISNKYLKFLGTVVSILILLI</sequence>
<comment type="function">
    <text evidence="3 4">GPI-anchored cell wall protein involved in cell wall organization, hyphal growth, as well as in host-fungal interaction and virulence. Plays a role in adherence to plastic and to host epithelial cells. Promotes the tissue fungal burden during murine vaginal candidiasis. Also increases susceptibility to neutrophil-mediated killing. Furthermore, contributes to the severity of hematogenously disseminated candidiasis in normal mice, but not in neutropenic mice.</text>
</comment>
<comment type="subcellular location">
    <subcellularLocation>
        <location evidence="6">Secreted</location>
        <location evidence="6">Cell wall</location>
    </subcellularLocation>
    <subcellularLocation>
        <location evidence="8">Membrane</location>
        <topology evidence="8">Lipid-anchor</topology>
        <topology evidence="8">GPI-anchor</topology>
    </subcellularLocation>
</comment>
<comment type="induction">
    <text evidence="5 7">Repressed by HAP43 and in absence of GOA1.</text>
</comment>
<comment type="PTM">
    <text>The GPI-anchor is attached to the protein in the endoplasmic reticulum and serves to target the protein to the cell surface. There, the glucosamine-inositol phospholipid moiety is cleaved off and the GPI-$modified mannoprotein is covalently attached via its lipidless GPI glycan remnant to the 1,6-beta-glucan of the outer cell wall layer.</text>
</comment>
<comment type="disruption phenotype">
    <text evidence="3">Leads to decreased adherence of germ tubes to plastic and epithelial cells, but not endothelial cells.</text>
</comment>
<comment type="similarity">
    <text evidence="8">Belongs to the HYR1/IFF family.</text>
</comment>
<gene>
    <name type="primary">IFF4</name>
    <name type="ordered locus">CAALFM_CR00610WA</name>
    <name type="ORF">CaO19.7472</name>
</gene>
<protein>
    <recommendedName>
        <fullName>Cell wall protein IFF4</fullName>
    </recommendedName>
    <alternativeName>
        <fullName>Adhesin-like protein IFF4</fullName>
    </alternativeName>
</protein>
<name>IFF4_CANAL</name>
<keyword id="KW-0134">Cell wall</keyword>
<keyword id="KW-0325">Glycoprotein</keyword>
<keyword id="KW-0336">GPI-anchor</keyword>
<keyword id="KW-0449">Lipoprotein</keyword>
<keyword id="KW-0472">Membrane</keyword>
<keyword id="KW-1185">Reference proteome</keyword>
<keyword id="KW-0964">Secreted</keyword>
<keyword id="KW-0732">Signal</keyword>
<keyword id="KW-0843">Virulence</keyword>
<feature type="signal peptide" evidence="1">
    <location>
        <begin position="1"/>
        <end position="20"/>
    </location>
</feature>
<feature type="chain" id="PRO_0000424760" description="Cell wall protein IFF4">
    <location>
        <begin position="21"/>
        <end position="1502"/>
    </location>
</feature>
<feature type="propeptide" id="PRO_0000424761" description="Removed in mature form" evidence="1">
    <location>
        <begin position="1503"/>
        <end position="1526"/>
    </location>
</feature>
<feature type="region of interest" description="Disordered" evidence="2">
    <location>
        <begin position="512"/>
        <end position="541"/>
    </location>
</feature>
<feature type="region of interest" description="Disordered" evidence="2">
    <location>
        <begin position="1180"/>
        <end position="1207"/>
    </location>
</feature>
<feature type="region of interest" description="Disordered" evidence="2">
    <location>
        <begin position="1455"/>
        <end position="1483"/>
    </location>
</feature>
<feature type="compositionally biased region" description="Polar residues" evidence="2">
    <location>
        <begin position="525"/>
        <end position="541"/>
    </location>
</feature>
<feature type="compositionally biased region" description="Polar residues" evidence="2">
    <location>
        <begin position="1193"/>
        <end position="1207"/>
    </location>
</feature>
<feature type="lipid moiety-binding region" description="GPI-anchor amidated asparagine" evidence="1">
    <location>
        <position position="1502"/>
    </location>
</feature>
<feature type="glycosylation site" description="N-linked (GlcNAc...) asparagine" evidence="1">
    <location>
        <position position="93"/>
    </location>
</feature>
<feature type="glycosylation site" description="N-linked (GlcNAc...) asparagine" evidence="1">
    <location>
        <position position="498"/>
    </location>
</feature>
<feature type="glycosylation site" description="N-linked (GlcNAc...) asparagine" evidence="1">
    <location>
        <position position="637"/>
    </location>
</feature>
<feature type="glycosylation site" description="N-linked (GlcNAc...) asparagine" evidence="1">
    <location>
        <position position="1451"/>
    </location>
</feature>
<feature type="glycosylation site" description="N-linked (GlcNAc...) asparagine" evidence="1">
    <location>
        <position position="1463"/>
    </location>
</feature>
<feature type="glycosylation site" description="N-linked (GlcNAc...) asparagine" evidence="1">
    <location>
        <position position="1479"/>
    </location>
</feature>
<feature type="glycosylation site" description="N-linked (GlcNAc...) asparagine" evidence="1">
    <location>
        <position position="1502"/>
    </location>
</feature>
<feature type="glycosylation site" description="N-linked (GlcNAc...) asparagine" evidence="1">
    <location>
        <position position="1506"/>
    </location>
</feature>